<accession>A7HD93</accession>
<comment type="function">
    <text evidence="1">The UvrABC repair system catalyzes the recognition and processing of DNA lesions. UvrC both incises the 5' and 3' sides of the lesion. The N-terminal half is responsible for the 3' incision and the C-terminal half is responsible for the 5' incision.</text>
</comment>
<comment type="subunit">
    <text evidence="1">Interacts with UvrB in an incision complex.</text>
</comment>
<comment type="subcellular location">
    <subcellularLocation>
        <location evidence="1">Cytoplasm</location>
    </subcellularLocation>
</comment>
<comment type="similarity">
    <text evidence="1">Belongs to the UvrC family.</text>
</comment>
<sequence>MDANLRKTLDELPAEPGCYLMKDRRGAVVYVGKASSLRSRVRSYFDASRGDDRAFVALLDELLGDVEVIVTRSEKEAVLLENELIKRHRPRFNIRLRDDKDFIVLRLDERHAFPRLEVRRAREPRRAGARYFGPYSSASSIRETLRVVNRHFQLRTCTDHVFEHRKRPCILYQIKRCPAPCVYDVPEAEYRQSVEDAIEFLEGRETELVERLHGRMDEAADALRFEDAARLRDQLQAVERSLEKQRVLMADRADRDVVGLYREGPDLVVQVLAMRAGKLQDSRSYPFHEQEFPDEETLSSFLSLYYEQNAAPEEILVPVEPAEVDALADVLSERRGRRVRLLTPQRGAKADLLEVAARNAEQGFRSWHEKDERREQALAALTRALHLARPPRWMECYDISTFQGALAVGSGVSFRDGEPDKACYRRYKVKGVAGQDDFAMLYEVVSRRLRRALGEGAFPDLLVIDGGKGQLNAALAAAKDLGVPTKPSPGNEGAPFVELVGLAKSRLVDAPALGTTRVIGRRGRGGGASRAASGAAALADAAEAQEHGFVSELARSPERVFLPGRKDPVVLRQNSAELFLLARLRDEAHRFAITFHRKLRRERNFQSVLEEISGIGEGRKRALLRHFGALRRVKEATLDEISQVDGFGPKQARAVFEFFHPPRREGAEGAAVVGPPSAAAAPPIETAAVAEAVSEEDIDAALAAEDEDAEGPAPVE</sequence>
<keyword id="KW-0963">Cytoplasm</keyword>
<keyword id="KW-0227">DNA damage</keyword>
<keyword id="KW-0228">DNA excision</keyword>
<keyword id="KW-0234">DNA repair</keyword>
<keyword id="KW-0267">Excision nuclease</keyword>
<keyword id="KW-1185">Reference proteome</keyword>
<keyword id="KW-0742">SOS response</keyword>
<evidence type="ECO:0000255" key="1">
    <source>
        <dbReference type="HAMAP-Rule" id="MF_00203"/>
    </source>
</evidence>
<organism>
    <name type="scientific">Anaeromyxobacter sp. (strain Fw109-5)</name>
    <dbReference type="NCBI Taxonomy" id="404589"/>
    <lineage>
        <taxon>Bacteria</taxon>
        <taxon>Pseudomonadati</taxon>
        <taxon>Myxococcota</taxon>
        <taxon>Myxococcia</taxon>
        <taxon>Myxococcales</taxon>
        <taxon>Cystobacterineae</taxon>
        <taxon>Anaeromyxobacteraceae</taxon>
        <taxon>Anaeromyxobacter</taxon>
    </lineage>
</organism>
<proteinExistence type="inferred from homology"/>
<feature type="chain" id="PRO_1000077750" description="UvrABC system protein C">
    <location>
        <begin position="1"/>
        <end position="716"/>
    </location>
</feature>
<feature type="domain" description="GIY-YIG" evidence="1">
    <location>
        <begin position="14"/>
        <end position="94"/>
    </location>
</feature>
<feature type="domain" description="UVR" evidence="1">
    <location>
        <begin position="206"/>
        <end position="241"/>
    </location>
</feature>
<protein>
    <recommendedName>
        <fullName evidence="1">UvrABC system protein C</fullName>
        <shortName evidence="1">Protein UvrC</shortName>
    </recommendedName>
    <alternativeName>
        <fullName evidence="1">Excinuclease ABC subunit C</fullName>
    </alternativeName>
</protein>
<name>UVRC_ANADF</name>
<reference key="1">
    <citation type="journal article" date="2015" name="Genome Announc.">
        <title>Complete genome sequence of Anaeromyxobacter sp. Fw109-5, an anaerobic, metal-reducing bacterium isolated from a contaminated subsurface environment.</title>
        <authorList>
            <person name="Hwang C."/>
            <person name="Copeland A."/>
            <person name="Lucas S."/>
            <person name="Lapidus A."/>
            <person name="Barry K."/>
            <person name="Glavina Del Rio T."/>
            <person name="Dalin E."/>
            <person name="Tice H."/>
            <person name="Pitluck S."/>
            <person name="Sims D."/>
            <person name="Brettin T."/>
            <person name="Bruce D.C."/>
            <person name="Detter J.C."/>
            <person name="Han C.S."/>
            <person name="Schmutz J."/>
            <person name="Larimer F.W."/>
            <person name="Land M.L."/>
            <person name="Hauser L.J."/>
            <person name="Kyrpides N."/>
            <person name="Lykidis A."/>
            <person name="Richardson P."/>
            <person name="Belieav A."/>
            <person name="Sanford R.A."/>
            <person name="Loeffler F.E."/>
            <person name="Fields M.W."/>
        </authorList>
    </citation>
    <scope>NUCLEOTIDE SEQUENCE [LARGE SCALE GENOMIC DNA]</scope>
    <source>
        <strain>Fw109-5</strain>
    </source>
</reference>
<gene>
    <name evidence="1" type="primary">uvrC</name>
    <name type="ordered locus">Anae109_2488</name>
</gene>
<dbReference type="EMBL" id="CP000769">
    <property type="protein sequence ID" value="ABS26689.1"/>
    <property type="molecule type" value="Genomic_DNA"/>
</dbReference>
<dbReference type="RefSeq" id="WP_012097281.1">
    <property type="nucleotide sequence ID" value="NC_009675.1"/>
</dbReference>
<dbReference type="SMR" id="A7HD93"/>
<dbReference type="STRING" id="404589.Anae109_2488"/>
<dbReference type="KEGG" id="afw:Anae109_2488"/>
<dbReference type="eggNOG" id="COG0322">
    <property type="taxonomic scope" value="Bacteria"/>
</dbReference>
<dbReference type="HOGENOM" id="CLU_014841_3_2_7"/>
<dbReference type="OrthoDB" id="9804933at2"/>
<dbReference type="Proteomes" id="UP000006382">
    <property type="component" value="Chromosome"/>
</dbReference>
<dbReference type="GO" id="GO:0005737">
    <property type="term" value="C:cytoplasm"/>
    <property type="evidence" value="ECO:0007669"/>
    <property type="project" value="UniProtKB-SubCell"/>
</dbReference>
<dbReference type="GO" id="GO:0009380">
    <property type="term" value="C:excinuclease repair complex"/>
    <property type="evidence" value="ECO:0007669"/>
    <property type="project" value="InterPro"/>
</dbReference>
<dbReference type="GO" id="GO:0003677">
    <property type="term" value="F:DNA binding"/>
    <property type="evidence" value="ECO:0007669"/>
    <property type="project" value="UniProtKB-UniRule"/>
</dbReference>
<dbReference type="GO" id="GO:0009381">
    <property type="term" value="F:excinuclease ABC activity"/>
    <property type="evidence" value="ECO:0007669"/>
    <property type="project" value="UniProtKB-UniRule"/>
</dbReference>
<dbReference type="GO" id="GO:0006289">
    <property type="term" value="P:nucleotide-excision repair"/>
    <property type="evidence" value="ECO:0007669"/>
    <property type="project" value="UniProtKB-UniRule"/>
</dbReference>
<dbReference type="GO" id="GO:0009432">
    <property type="term" value="P:SOS response"/>
    <property type="evidence" value="ECO:0007669"/>
    <property type="project" value="UniProtKB-UniRule"/>
</dbReference>
<dbReference type="CDD" id="cd10434">
    <property type="entry name" value="GIY-YIG_UvrC_Cho"/>
    <property type="match status" value="1"/>
</dbReference>
<dbReference type="FunFam" id="3.40.1440.10:FF:000001">
    <property type="entry name" value="UvrABC system protein C"/>
    <property type="match status" value="1"/>
</dbReference>
<dbReference type="Gene3D" id="1.10.150.20">
    <property type="entry name" value="5' to 3' exonuclease, C-terminal subdomain"/>
    <property type="match status" value="1"/>
</dbReference>
<dbReference type="Gene3D" id="3.40.1440.10">
    <property type="entry name" value="GIY-YIG endonuclease"/>
    <property type="match status" value="1"/>
</dbReference>
<dbReference type="Gene3D" id="4.10.860.10">
    <property type="entry name" value="UVR domain"/>
    <property type="match status" value="1"/>
</dbReference>
<dbReference type="Gene3D" id="3.30.420.340">
    <property type="entry name" value="UvrC, RNAse H endonuclease domain"/>
    <property type="match status" value="1"/>
</dbReference>
<dbReference type="HAMAP" id="MF_00203">
    <property type="entry name" value="UvrC"/>
    <property type="match status" value="1"/>
</dbReference>
<dbReference type="InterPro" id="IPR041663">
    <property type="entry name" value="DisA/LigA_HHH"/>
</dbReference>
<dbReference type="InterPro" id="IPR000305">
    <property type="entry name" value="GIY-YIG_endonuc"/>
</dbReference>
<dbReference type="InterPro" id="IPR035901">
    <property type="entry name" value="GIY-YIG_endonuc_sf"/>
</dbReference>
<dbReference type="InterPro" id="IPR047296">
    <property type="entry name" value="GIY-YIG_UvrC_Cho"/>
</dbReference>
<dbReference type="InterPro" id="IPR003583">
    <property type="entry name" value="Hlx-hairpin-Hlx_DNA-bd_motif"/>
</dbReference>
<dbReference type="InterPro" id="IPR010994">
    <property type="entry name" value="RuvA_2-like"/>
</dbReference>
<dbReference type="InterPro" id="IPR001943">
    <property type="entry name" value="UVR_dom"/>
</dbReference>
<dbReference type="InterPro" id="IPR036876">
    <property type="entry name" value="UVR_dom_sf"/>
</dbReference>
<dbReference type="InterPro" id="IPR050066">
    <property type="entry name" value="UvrABC_protein_C"/>
</dbReference>
<dbReference type="InterPro" id="IPR004791">
    <property type="entry name" value="UvrC"/>
</dbReference>
<dbReference type="InterPro" id="IPR001162">
    <property type="entry name" value="UvrC_RNase_H_dom"/>
</dbReference>
<dbReference type="InterPro" id="IPR038476">
    <property type="entry name" value="UvrC_RNase_H_dom_sf"/>
</dbReference>
<dbReference type="NCBIfam" id="TIGR00194">
    <property type="entry name" value="uvrC"/>
    <property type="match status" value="1"/>
</dbReference>
<dbReference type="PANTHER" id="PTHR30562:SF1">
    <property type="entry name" value="UVRABC SYSTEM PROTEIN C"/>
    <property type="match status" value="1"/>
</dbReference>
<dbReference type="PANTHER" id="PTHR30562">
    <property type="entry name" value="UVRC/OXIDOREDUCTASE"/>
    <property type="match status" value="1"/>
</dbReference>
<dbReference type="Pfam" id="PF01541">
    <property type="entry name" value="GIY-YIG"/>
    <property type="match status" value="1"/>
</dbReference>
<dbReference type="Pfam" id="PF12826">
    <property type="entry name" value="HHH_2"/>
    <property type="match status" value="1"/>
</dbReference>
<dbReference type="Pfam" id="PF02151">
    <property type="entry name" value="UVR"/>
    <property type="match status" value="1"/>
</dbReference>
<dbReference type="Pfam" id="PF22920">
    <property type="entry name" value="UvrC_RNaseH"/>
    <property type="match status" value="1"/>
</dbReference>
<dbReference type="Pfam" id="PF08459">
    <property type="entry name" value="UvrC_RNaseH_dom"/>
    <property type="match status" value="2"/>
</dbReference>
<dbReference type="SMART" id="SM00465">
    <property type="entry name" value="GIYc"/>
    <property type="match status" value="1"/>
</dbReference>
<dbReference type="SMART" id="SM00278">
    <property type="entry name" value="HhH1"/>
    <property type="match status" value="2"/>
</dbReference>
<dbReference type="SUPFAM" id="SSF46600">
    <property type="entry name" value="C-terminal UvrC-binding domain of UvrB"/>
    <property type="match status" value="1"/>
</dbReference>
<dbReference type="SUPFAM" id="SSF82771">
    <property type="entry name" value="GIY-YIG endonuclease"/>
    <property type="match status" value="1"/>
</dbReference>
<dbReference type="SUPFAM" id="SSF47781">
    <property type="entry name" value="RuvA domain 2-like"/>
    <property type="match status" value="1"/>
</dbReference>
<dbReference type="PROSITE" id="PS50164">
    <property type="entry name" value="GIY_YIG"/>
    <property type="match status" value="1"/>
</dbReference>
<dbReference type="PROSITE" id="PS50151">
    <property type="entry name" value="UVR"/>
    <property type="match status" value="1"/>
</dbReference>
<dbReference type="PROSITE" id="PS50165">
    <property type="entry name" value="UVRC"/>
    <property type="match status" value="1"/>
</dbReference>